<gene>
    <name evidence="1" type="primary">hemL</name>
    <name type="ordered locus">PA14_12390</name>
</gene>
<name>GSA_PSEAB</name>
<evidence type="ECO:0000255" key="1">
    <source>
        <dbReference type="HAMAP-Rule" id="MF_00375"/>
    </source>
</evidence>
<reference key="1">
    <citation type="journal article" date="2006" name="Genome Biol.">
        <title>Genomic analysis reveals that Pseudomonas aeruginosa virulence is combinatorial.</title>
        <authorList>
            <person name="Lee D.G."/>
            <person name="Urbach J.M."/>
            <person name="Wu G."/>
            <person name="Liberati N.T."/>
            <person name="Feinbaum R.L."/>
            <person name="Miyata S."/>
            <person name="Diggins L.T."/>
            <person name="He J."/>
            <person name="Saucier M."/>
            <person name="Deziel E."/>
            <person name="Friedman L."/>
            <person name="Li L."/>
            <person name="Grills G."/>
            <person name="Montgomery K."/>
            <person name="Kucherlapati R."/>
            <person name="Rahme L.G."/>
            <person name="Ausubel F.M."/>
        </authorList>
    </citation>
    <scope>NUCLEOTIDE SEQUENCE [LARGE SCALE GENOMIC DNA]</scope>
    <source>
        <strain>UCBPP-PA14</strain>
    </source>
</reference>
<organism>
    <name type="scientific">Pseudomonas aeruginosa (strain UCBPP-PA14)</name>
    <dbReference type="NCBI Taxonomy" id="208963"/>
    <lineage>
        <taxon>Bacteria</taxon>
        <taxon>Pseudomonadati</taxon>
        <taxon>Pseudomonadota</taxon>
        <taxon>Gammaproteobacteria</taxon>
        <taxon>Pseudomonadales</taxon>
        <taxon>Pseudomonadaceae</taxon>
        <taxon>Pseudomonas</taxon>
    </lineage>
</organism>
<comment type="catalytic activity">
    <reaction evidence="1">
        <text>(S)-4-amino-5-oxopentanoate = 5-aminolevulinate</text>
        <dbReference type="Rhea" id="RHEA:14265"/>
        <dbReference type="ChEBI" id="CHEBI:57501"/>
        <dbReference type="ChEBI" id="CHEBI:356416"/>
        <dbReference type="EC" id="5.4.3.8"/>
    </reaction>
</comment>
<comment type="cofactor">
    <cofactor evidence="1">
        <name>pyridoxal 5'-phosphate</name>
        <dbReference type="ChEBI" id="CHEBI:597326"/>
    </cofactor>
</comment>
<comment type="pathway">
    <text evidence="1">Porphyrin-containing compound metabolism; protoporphyrin-IX biosynthesis; 5-aminolevulinate from L-glutamyl-tRNA(Glu): step 2/2.</text>
</comment>
<comment type="subunit">
    <text evidence="1">Homodimer.</text>
</comment>
<comment type="subcellular location">
    <subcellularLocation>
        <location evidence="1">Cytoplasm</location>
    </subcellularLocation>
</comment>
<comment type="similarity">
    <text evidence="1">Belongs to the class-III pyridoxal-phosphate-dependent aminotransferase family. HemL subfamily.</text>
</comment>
<dbReference type="EC" id="5.4.3.8" evidence="1"/>
<dbReference type="EMBL" id="CP000438">
    <property type="protein sequence ID" value="ABJ13252.1"/>
    <property type="molecule type" value="Genomic_DNA"/>
</dbReference>
<dbReference type="RefSeq" id="WP_003132522.1">
    <property type="nucleotide sequence ID" value="NZ_CP034244.1"/>
</dbReference>
<dbReference type="SMR" id="Q02SE5"/>
<dbReference type="KEGG" id="pau:PA14_12390"/>
<dbReference type="PseudoCAP" id="PA14_12390"/>
<dbReference type="HOGENOM" id="CLU_016922_1_5_6"/>
<dbReference type="BioCyc" id="PAER208963:G1G74-1027-MONOMER"/>
<dbReference type="UniPathway" id="UPA00251">
    <property type="reaction ID" value="UER00317"/>
</dbReference>
<dbReference type="Proteomes" id="UP000000653">
    <property type="component" value="Chromosome"/>
</dbReference>
<dbReference type="GO" id="GO:0005737">
    <property type="term" value="C:cytoplasm"/>
    <property type="evidence" value="ECO:0007669"/>
    <property type="project" value="UniProtKB-SubCell"/>
</dbReference>
<dbReference type="GO" id="GO:0042286">
    <property type="term" value="F:glutamate-1-semialdehyde 2,1-aminomutase activity"/>
    <property type="evidence" value="ECO:0007669"/>
    <property type="project" value="UniProtKB-UniRule"/>
</dbReference>
<dbReference type="GO" id="GO:0030170">
    <property type="term" value="F:pyridoxal phosphate binding"/>
    <property type="evidence" value="ECO:0007669"/>
    <property type="project" value="InterPro"/>
</dbReference>
<dbReference type="GO" id="GO:0008483">
    <property type="term" value="F:transaminase activity"/>
    <property type="evidence" value="ECO:0007669"/>
    <property type="project" value="InterPro"/>
</dbReference>
<dbReference type="GO" id="GO:0006782">
    <property type="term" value="P:protoporphyrinogen IX biosynthetic process"/>
    <property type="evidence" value="ECO:0007669"/>
    <property type="project" value="UniProtKB-UniRule"/>
</dbReference>
<dbReference type="CDD" id="cd00610">
    <property type="entry name" value="OAT_like"/>
    <property type="match status" value="1"/>
</dbReference>
<dbReference type="FunFam" id="3.40.640.10:FF:000021">
    <property type="entry name" value="Glutamate-1-semialdehyde 2,1-aminomutase"/>
    <property type="match status" value="1"/>
</dbReference>
<dbReference type="Gene3D" id="3.90.1150.10">
    <property type="entry name" value="Aspartate Aminotransferase, domain 1"/>
    <property type="match status" value="1"/>
</dbReference>
<dbReference type="Gene3D" id="3.40.640.10">
    <property type="entry name" value="Type I PLP-dependent aspartate aminotransferase-like (Major domain)"/>
    <property type="match status" value="1"/>
</dbReference>
<dbReference type="HAMAP" id="MF_00375">
    <property type="entry name" value="HemL_aminotrans_3"/>
    <property type="match status" value="1"/>
</dbReference>
<dbReference type="InterPro" id="IPR004639">
    <property type="entry name" value="4pyrrol_synth_GluAld_NH2Trfase"/>
</dbReference>
<dbReference type="InterPro" id="IPR005814">
    <property type="entry name" value="Aminotrans_3"/>
</dbReference>
<dbReference type="InterPro" id="IPR049704">
    <property type="entry name" value="Aminotrans_3_PPA_site"/>
</dbReference>
<dbReference type="InterPro" id="IPR015424">
    <property type="entry name" value="PyrdxlP-dep_Trfase"/>
</dbReference>
<dbReference type="InterPro" id="IPR015421">
    <property type="entry name" value="PyrdxlP-dep_Trfase_major"/>
</dbReference>
<dbReference type="InterPro" id="IPR015422">
    <property type="entry name" value="PyrdxlP-dep_Trfase_small"/>
</dbReference>
<dbReference type="NCBIfam" id="TIGR00713">
    <property type="entry name" value="hemL"/>
    <property type="match status" value="1"/>
</dbReference>
<dbReference type="NCBIfam" id="NF000818">
    <property type="entry name" value="PRK00062.1"/>
    <property type="match status" value="1"/>
</dbReference>
<dbReference type="PANTHER" id="PTHR43713">
    <property type="entry name" value="GLUTAMATE-1-SEMIALDEHYDE 2,1-AMINOMUTASE"/>
    <property type="match status" value="1"/>
</dbReference>
<dbReference type="PANTHER" id="PTHR43713:SF3">
    <property type="entry name" value="GLUTAMATE-1-SEMIALDEHYDE 2,1-AMINOMUTASE 1, CHLOROPLASTIC-RELATED"/>
    <property type="match status" value="1"/>
</dbReference>
<dbReference type="Pfam" id="PF00202">
    <property type="entry name" value="Aminotran_3"/>
    <property type="match status" value="1"/>
</dbReference>
<dbReference type="SUPFAM" id="SSF53383">
    <property type="entry name" value="PLP-dependent transferases"/>
    <property type="match status" value="1"/>
</dbReference>
<dbReference type="PROSITE" id="PS00600">
    <property type="entry name" value="AA_TRANSFER_CLASS_3"/>
    <property type="match status" value="1"/>
</dbReference>
<keyword id="KW-0963">Cytoplasm</keyword>
<keyword id="KW-0413">Isomerase</keyword>
<keyword id="KW-0627">Porphyrin biosynthesis</keyword>
<keyword id="KW-0663">Pyridoxal phosphate</keyword>
<protein>
    <recommendedName>
        <fullName evidence="1">Glutamate-1-semialdehyde 2,1-aminomutase</fullName>
        <shortName evidence="1">GSA</shortName>
        <ecNumber evidence="1">5.4.3.8</ecNumber>
    </recommendedName>
    <alternativeName>
        <fullName evidence="1">Glutamate-1-semialdehyde aminotransferase</fullName>
        <shortName evidence="1">GSA-AT</shortName>
    </alternativeName>
</protein>
<feature type="chain" id="PRO_0000300936" description="Glutamate-1-semialdehyde 2,1-aminomutase">
    <location>
        <begin position="1"/>
        <end position="427"/>
    </location>
</feature>
<feature type="modified residue" description="N6-(pyridoxal phosphate)lysine" evidence="1">
    <location>
        <position position="265"/>
    </location>
</feature>
<accession>Q02SE5</accession>
<proteinExistence type="inferred from homology"/>
<sequence>MSRSETLFNNAQKHIPGGVNSPVRAFKSVGGTPLFFKHAEGAYVLDEDDKRYVDYVGSWGPMILGHSHPDVLDAVRRQLDHGLSYGAPTALEVEMADLVCSMVPSMEMVRMVSSGTEATMSAIRLARGYTGRDSIIKFEGCYHGHSDSLLVKAGSGALTFGVPNSPGVPAAFAKHTLTLPFNDIEAVRKTLGEVGKEVACIIVEPVAGNMNCVPPAPGFLEGLREACDEHGVVLIFDEVMTGFRVALGGAQAYYGVTPDLSTFGKIIGGGMPVGAFGGKREIMQQISPLGPVYQAGTLSGNPLAMAAGLTTLRLISRPGFHNELTAYTTRMLDGLQQRADAAGIPFVTTQAGGMFGLYFSGADAIVTFEDVMASDVERFKRFFHLMLDGGVYLAPSAFEAGFTSIAHGDKELEITLNAAEKAFAALK</sequence>